<evidence type="ECO:0000255" key="1">
    <source>
        <dbReference type="HAMAP-Rule" id="MF_00133"/>
    </source>
</evidence>
<feature type="chain" id="PRO_1000117748" description="Tryptophan synthase beta chain">
    <location>
        <begin position="1"/>
        <end position="396"/>
    </location>
</feature>
<feature type="modified residue" description="N6-(pyridoxal phosphate)lysine" evidence="1">
    <location>
        <position position="96"/>
    </location>
</feature>
<accession>B6YQ32</accession>
<dbReference type="EC" id="4.2.1.20" evidence="1"/>
<dbReference type="EMBL" id="AP010656">
    <property type="protein sequence ID" value="BAG83304.1"/>
    <property type="molecule type" value="Genomic_DNA"/>
</dbReference>
<dbReference type="RefSeq" id="WP_012573065.1">
    <property type="nucleotide sequence ID" value="NC_011565.1"/>
</dbReference>
<dbReference type="SMR" id="B6YQ32"/>
<dbReference type="STRING" id="511995.CFPG_041"/>
<dbReference type="KEGG" id="aps:CFPG_041"/>
<dbReference type="eggNOG" id="COG0133">
    <property type="taxonomic scope" value="Bacteria"/>
</dbReference>
<dbReference type="HOGENOM" id="CLU_016734_3_1_10"/>
<dbReference type="OrthoDB" id="9766131at2"/>
<dbReference type="UniPathway" id="UPA00035">
    <property type="reaction ID" value="UER00044"/>
</dbReference>
<dbReference type="Proteomes" id="UP000000723">
    <property type="component" value="Chromosome"/>
</dbReference>
<dbReference type="GO" id="GO:0005737">
    <property type="term" value="C:cytoplasm"/>
    <property type="evidence" value="ECO:0007669"/>
    <property type="project" value="TreeGrafter"/>
</dbReference>
<dbReference type="GO" id="GO:0004834">
    <property type="term" value="F:tryptophan synthase activity"/>
    <property type="evidence" value="ECO:0007669"/>
    <property type="project" value="UniProtKB-UniRule"/>
</dbReference>
<dbReference type="CDD" id="cd06446">
    <property type="entry name" value="Trp-synth_B"/>
    <property type="match status" value="1"/>
</dbReference>
<dbReference type="FunFam" id="3.40.50.1100:FF:000001">
    <property type="entry name" value="Tryptophan synthase beta chain"/>
    <property type="match status" value="1"/>
</dbReference>
<dbReference type="FunFam" id="3.40.50.1100:FF:000004">
    <property type="entry name" value="Tryptophan synthase beta chain"/>
    <property type="match status" value="1"/>
</dbReference>
<dbReference type="Gene3D" id="3.40.50.1100">
    <property type="match status" value="2"/>
</dbReference>
<dbReference type="HAMAP" id="MF_00133">
    <property type="entry name" value="Trp_synth_beta"/>
    <property type="match status" value="1"/>
</dbReference>
<dbReference type="InterPro" id="IPR006653">
    <property type="entry name" value="Trp_synth_b_CS"/>
</dbReference>
<dbReference type="InterPro" id="IPR006654">
    <property type="entry name" value="Trp_synth_beta"/>
</dbReference>
<dbReference type="InterPro" id="IPR023026">
    <property type="entry name" value="Trp_synth_beta/beta-like"/>
</dbReference>
<dbReference type="InterPro" id="IPR001926">
    <property type="entry name" value="TrpB-like_PALP"/>
</dbReference>
<dbReference type="InterPro" id="IPR036052">
    <property type="entry name" value="TrpB-like_PALP_sf"/>
</dbReference>
<dbReference type="NCBIfam" id="TIGR00263">
    <property type="entry name" value="trpB"/>
    <property type="match status" value="1"/>
</dbReference>
<dbReference type="PANTHER" id="PTHR48077:SF3">
    <property type="entry name" value="TRYPTOPHAN SYNTHASE"/>
    <property type="match status" value="1"/>
</dbReference>
<dbReference type="PANTHER" id="PTHR48077">
    <property type="entry name" value="TRYPTOPHAN SYNTHASE-RELATED"/>
    <property type="match status" value="1"/>
</dbReference>
<dbReference type="Pfam" id="PF00291">
    <property type="entry name" value="PALP"/>
    <property type="match status" value="1"/>
</dbReference>
<dbReference type="PIRSF" id="PIRSF001413">
    <property type="entry name" value="Trp_syn_beta"/>
    <property type="match status" value="1"/>
</dbReference>
<dbReference type="SUPFAM" id="SSF53686">
    <property type="entry name" value="Tryptophan synthase beta subunit-like PLP-dependent enzymes"/>
    <property type="match status" value="1"/>
</dbReference>
<dbReference type="PROSITE" id="PS00168">
    <property type="entry name" value="TRP_SYNTHASE_BETA"/>
    <property type="match status" value="1"/>
</dbReference>
<proteinExistence type="inferred from homology"/>
<gene>
    <name evidence="1" type="primary">trpB</name>
    <name type="ordered locus">CFPG_041</name>
</gene>
<sequence length="396" mass="43942">MKEKLTNNTFQVNEKGYYGKFGGAFIPEILHENINRLQKAYKSIIESQEFIEQYYKLLHDYAGRPSPLYFAKRLSDKHKCRIYIKREDLNHTGSHKINNTLGQILLSRKMGKTRIIAETGAGQHGVASATVCALMDMKCVVYMGKTDINRQNLNVRKMEMLGATVIPVTSGNMTLKDATNEAIRDWCSNPDDTHYIIGSTVGPHPYPDMVARFQSIISKEIKSQLPEKENRNYPDYLIACIGGGSNAAGTIYEYLYDNRVKIILAEAAGQGIHSGHSAATIHLGKIGIIHGSKTLIMQTSDGQIEEPYSISAGLDYPGIGPMHAHIAKQGRSEILAIDDNEALSAAMELTRLEGIIPALESAHALGIFQKKQFKTNDVIVVCLSGRGDKDMETYYK</sequence>
<name>TRPB_AZOPC</name>
<organism>
    <name type="scientific">Azobacteroides pseudotrichonymphae genomovar. CFP2</name>
    <dbReference type="NCBI Taxonomy" id="511995"/>
    <lineage>
        <taxon>Bacteria</taxon>
        <taxon>Pseudomonadati</taxon>
        <taxon>Bacteroidota</taxon>
        <taxon>Bacteroidia</taxon>
        <taxon>Bacteroidales</taxon>
        <taxon>Candidatus Azobacteroides</taxon>
    </lineage>
</organism>
<protein>
    <recommendedName>
        <fullName evidence="1">Tryptophan synthase beta chain</fullName>
        <ecNumber evidence="1">4.2.1.20</ecNumber>
    </recommendedName>
</protein>
<reference key="1">
    <citation type="journal article" date="2008" name="Science">
        <title>Genome of an endosymbiont coupling N2 fixation to cellulolysis within RT protist cells in termite gut.</title>
        <authorList>
            <person name="Hongoh Y."/>
            <person name="Sharma V.K."/>
            <person name="Prakash T."/>
            <person name="Noda S."/>
            <person name="Toh H."/>
            <person name="Taylor T.D."/>
            <person name="Kudo T."/>
            <person name="Sakaki Y."/>
            <person name="Toyoda A."/>
            <person name="Hattori M."/>
            <person name="Ohkuma M."/>
        </authorList>
    </citation>
    <scope>NUCLEOTIDE SEQUENCE [LARGE SCALE GENOMIC DNA]</scope>
</reference>
<keyword id="KW-0028">Amino-acid biosynthesis</keyword>
<keyword id="KW-0057">Aromatic amino acid biosynthesis</keyword>
<keyword id="KW-0456">Lyase</keyword>
<keyword id="KW-0663">Pyridoxal phosphate</keyword>
<keyword id="KW-1185">Reference proteome</keyword>
<keyword id="KW-0822">Tryptophan biosynthesis</keyword>
<comment type="function">
    <text evidence="1">The beta subunit is responsible for the synthesis of L-tryptophan from indole and L-serine.</text>
</comment>
<comment type="catalytic activity">
    <reaction evidence="1">
        <text>(1S,2R)-1-C-(indol-3-yl)glycerol 3-phosphate + L-serine = D-glyceraldehyde 3-phosphate + L-tryptophan + H2O</text>
        <dbReference type="Rhea" id="RHEA:10532"/>
        <dbReference type="ChEBI" id="CHEBI:15377"/>
        <dbReference type="ChEBI" id="CHEBI:33384"/>
        <dbReference type="ChEBI" id="CHEBI:57912"/>
        <dbReference type="ChEBI" id="CHEBI:58866"/>
        <dbReference type="ChEBI" id="CHEBI:59776"/>
        <dbReference type="EC" id="4.2.1.20"/>
    </reaction>
</comment>
<comment type="cofactor">
    <cofactor evidence="1">
        <name>pyridoxal 5'-phosphate</name>
        <dbReference type="ChEBI" id="CHEBI:597326"/>
    </cofactor>
</comment>
<comment type="pathway">
    <text evidence="1">Amino-acid biosynthesis; L-tryptophan biosynthesis; L-tryptophan from chorismate: step 5/5.</text>
</comment>
<comment type="subunit">
    <text evidence="1">Tetramer of two alpha and two beta chains.</text>
</comment>
<comment type="similarity">
    <text evidence="1">Belongs to the TrpB family.</text>
</comment>